<evidence type="ECO:0000250" key="1">
    <source>
        <dbReference type="UniProtKB" id="Q9UKA4"/>
    </source>
</evidence>
<evidence type="ECO:0000256" key="2">
    <source>
        <dbReference type="SAM" id="MobiDB-lite"/>
    </source>
</evidence>
<evidence type="ECO:0007744" key="3">
    <source>
    </source>
</evidence>
<organism>
    <name type="scientific">Rattus norvegicus</name>
    <name type="common">Rat</name>
    <dbReference type="NCBI Taxonomy" id="10116"/>
    <lineage>
        <taxon>Eukaryota</taxon>
        <taxon>Metazoa</taxon>
        <taxon>Chordata</taxon>
        <taxon>Craniata</taxon>
        <taxon>Vertebrata</taxon>
        <taxon>Euteleostomi</taxon>
        <taxon>Mammalia</taxon>
        <taxon>Eutheria</taxon>
        <taxon>Euarchontoglires</taxon>
        <taxon>Glires</taxon>
        <taxon>Rodentia</taxon>
        <taxon>Myomorpha</taxon>
        <taxon>Muroidea</taxon>
        <taxon>Muridae</taxon>
        <taxon>Murinae</taxon>
        <taxon>Rattus</taxon>
    </lineage>
</organism>
<dbReference type="EMBL" id="U48288">
    <property type="protein sequence ID" value="AAB06559.1"/>
    <property type="molecule type" value="mRNA"/>
</dbReference>
<dbReference type="PIR" id="T42732">
    <property type="entry name" value="T42732"/>
</dbReference>
<dbReference type="FunCoup" id="Q62924">
    <property type="interactions" value="3082"/>
</dbReference>
<dbReference type="IntAct" id="Q62924">
    <property type="interactions" value="2"/>
</dbReference>
<dbReference type="MINT" id="Q62924"/>
<dbReference type="STRING" id="10116.ENSRNOP00000054952"/>
<dbReference type="iPTMnet" id="Q62924"/>
<dbReference type="PaxDb" id="10116-ENSRNOP00000054952"/>
<dbReference type="UCSC" id="RGD:2079">
    <property type="organism name" value="rat"/>
</dbReference>
<dbReference type="AGR" id="RGD:2079"/>
<dbReference type="RGD" id="2079">
    <property type="gene designation" value="Akap11"/>
</dbReference>
<dbReference type="eggNOG" id="ENOG502QRN4">
    <property type="taxonomic scope" value="Eukaryota"/>
</dbReference>
<dbReference type="InParanoid" id="Q62924"/>
<dbReference type="PRO" id="PR:Q62924"/>
<dbReference type="Proteomes" id="UP000002494">
    <property type="component" value="Unplaced"/>
</dbReference>
<dbReference type="GO" id="GO:0005737">
    <property type="term" value="C:cytoplasm"/>
    <property type="evidence" value="ECO:0000318"/>
    <property type="project" value="GO_Central"/>
</dbReference>
<dbReference type="GO" id="GO:0005777">
    <property type="term" value="C:peroxisome"/>
    <property type="evidence" value="ECO:0000314"/>
    <property type="project" value="MGI"/>
</dbReference>
<dbReference type="GO" id="GO:0032991">
    <property type="term" value="C:protein-containing complex"/>
    <property type="evidence" value="ECO:0000314"/>
    <property type="project" value="RGD"/>
</dbReference>
<dbReference type="GO" id="GO:0019207">
    <property type="term" value="F:kinase regulator activity"/>
    <property type="evidence" value="ECO:0000314"/>
    <property type="project" value="MGI"/>
</dbReference>
<dbReference type="GO" id="GO:0051018">
    <property type="term" value="F:protein kinase A binding"/>
    <property type="evidence" value="ECO:0000318"/>
    <property type="project" value="GO_Central"/>
</dbReference>
<dbReference type="GO" id="GO:0034236">
    <property type="term" value="F:protein kinase A catalytic subunit binding"/>
    <property type="evidence" value="ECO:0000314"/>
    <property type="project" value="RGD"/>
</dbReference>
<dbReference type="GO" id="GO:0034237">
    <property type="term" value="F:protein kinase A regulatory subunit binding"/>
    <property type="evidence" value="ECO:0000314"/>
    <property type="project" value="RGD"/>
</dbReference>
<dbReference type="GO" id="GO:0008157">
    <property type="term" value="F:protein phosphatase 1 binding"/>
    <property type="evidence" value="ECO:0000314"/>
    <property type="project" value="RGD"/>
</dbReference>
<dbReference type="GO" id="GO:0030866">
    <property type="term" value="P:cortical actin cytoskeleton organization"/>
    <property type="evidence" value="ECO:0000266"/>
    <property type="project" value="RGD"/>
</dbReference>
<dbReference type="GO" id="GO:1903142">
    <property type="term" value="P:positive regulation of establishment of endothelial barrier"/>
    <property type="evidence" value="ECO:0000315"/>
    <property type="project" value="RGD"/>
</dbReference>
<dbReference type="GO" id="GO:0008104">
    <property type="term" value="P:protein localization"/>
    <property type="evidence" value="ECO:0000266"/>
    <property type="project" value="RGD"/>
</dbReference>
<dbReference type="GO" id="GO:0036010">
    <property type="term" value="P:protein localization to endosome"/>
    <property type="evidence" value="ECO:0000266"/>
    <property type="project" value="RGD"/>
</dbReference>
<dbReference type="GO" id="GO:0003091">
    <property type="term" value="P:renal water homeostasis"/>
    <property type="evidence" value="ECO:0000266"/>
    <property type="project" value="RGD"/>
</dbReference>
<dbReference type="InterPro" id="IPR008382">
    <property type="entry name" value="SPHK1-interactor_AKAP_110"/>
</dbReference>
<dbReference type="PANTHER" id="PTHR10226">
    <property type="entry name" value="A KINASE ANCHOR PROTEIN"/>
    <property type="match status" value="1"/>
</dbReference>
<dbReference type="PANTHER" id="PTHR10226:SF3">
    <property type="entry name" value="A-KINASE ANCHOR PROTEIN 11"/>
    <property type="match status" value="1"/>
</dbReference>
<proteinExistence type="evidence at protein level"/>
<comment type="function">
    <text>Binds to type II regulatory subunits of protein kinase A and anchors/targets them.</text>
</comment>
<comment type="subcellular location">
    <subcellularLocation>
        <location>Peroxisome</location>
    </subcellularLocation>
</comment>
<comment type="tissue specificity">
    <text>Expressed in brain and testis.</text>
</comment>
<comment type="domain">
    <text>RII-alpha binding site, predicted to form an amphipathic helix, could participate in protein-protein interactions with a complementary surface on the R-subunit dimer.</text>
</comment>
<gene>
    <name type="primary">Akap11</name>
    <name type="synonym">Akap220</name>
</gene>
<protein>
    <recommendedName>
        <fullName>A-kinase anchor protein 11</fullName>
        <shortName>AKAP-11</shortName>
    </recommendedName>
    <alternativeName>
        <fullName>A-kinase anchor protein 220 kDa</fullName>
        <shortName>AKAP 220</shortName>
    </alternativeName>
    <alternativeName>
        <fullName>Protein kinase A-anchoring protein 11</fullName>
        <shortName>PRKA11</shortName>
    </alternativeName>
</protein>
<keyword id="KW-0576">Peroxisome</keyword>
<keyword id="KW-0597">Phosphoprotein</keyword>
<keyword id="KW-1185">Reference proteome</keyword>
<name>AKA11_RAT</name>
<reference key="1">
    <citation type="journal article" date="1996" name="J. Biol. Chem.">
        <title>Cloning and characterization of a novel A-kinase anchoring protein. AKAP 220, association with testicular peroxisomes.</title>
        <authorList>
            <person name="Lester L.B."/>
            <person name="Coghlan V.M."/>
            <person name="Nauert B."/>
            <person name="Scott J.D."/>
        </authorList>
    </citation>
    <scope>NUCLEOTIDE SEQUENCE [MRNA]</scope>
    <source>
        <tissue>Pituitary</tissue>
    </source>
</reference>
<reference key="2">
    <citation type="journal article" date="2012" name="Nat. Commun.">
        <title>Quantitative maps of protein phosphorylation sites across 14 different rat organs and tissues.</title>
        <authorList>
            <person name="Lundby A."/>
            <person name="Secher A."/>
            <person name="Lage K."/>
            <person name="Nordsborg N.B."/>
            <person name="Dmytriyev A."/>
            <person name="Lundby C."/>
            <person name="Olsen J.V."/>
        </authorList>
    </citation>
    <scope>PHOSPHORYLATION [LARGE SCALE ANALYSIS] AT SER-439 AND SER-440</scope>
    <scope>IDENTIFICATION BY MASS SPECTROMETRY [LARGE SCALE ANALYSIS]</scope>
</reference>
<accession>Q62924</accession>
<feature type="chain" id="PRO_0000064518" description="A-kinase anchor protein 11">
    <location>
        <begin position="1"/>
        <end position="1129"/>
    </location>
</feature>
<feature type="region of interest" description="Disordered" evidence="2">
    <location>
        <begin position="1"/>
        <end position="21"/>
    </location>
</feature>
<feature type="region of interest" description="Disordered" evidence="2">
    <location>
        <begin position="354"/>
        <end position="376"/>
    </location>
</feature>
<feature type="region of interest" description="Disordered" evidence="2">
    <location>
        <begin position="394"/>
        <end position="416"/>
    </location>
</feature>
<feature type="region of interest" description="Disordered" evidence="2">
    <location>
        <begin position="434"/>
        <end position="455"/>
    </location>
</feature>
<feature type="region of interest" description="PKA-RII binding region">
    <location>
        <begin position="905"/>
        <end position="918"/>
    </location>
</feature>
<feature type="region of interest" description="Disordered" evidence="2">
    <location>
        <begin position="962"/>
        <end position="1061"/>
    </location>
</feature>
<feature type="compositionally biased region" description="Basic residues" evidence="2">
    <location>
        <begin position="1"/>
        <end position="12"/>
    </location>
</feature>
<feature type="compositionally biased region" description="Polar residues" evidence="2">
    <location>
        <begin position="404"/>
        <end position="416"/>
    </location>
</feature>
<feature type="compositionally biased region" description="Basic and acidic residues" evidence="2">
    <location>
        <begin position="442"/>
        <end position="455"/>
    </location>
</feature>
<feature type="compositionally biased region" description="Polar residues" evidence="2">
    <location>
        <begin position="968"/>
        <end position="995"/>
    </location>
</feature>
<feature type="compositionally biased region" description="Basic and acidic residues" evidence="2">
    <location>
        <begin position="1002"/>
        <end position="1011"/>
    </location>
</feature>
<feature type="compositionally biased region" description="Low complexity" evidence="2">
    <location>
        <begin position="1012"/>
        <end position="1028"/>
    </location>
</feature>
<feature type="compositionally biased region" description="Polar residues" evidence="2">
    <location>
        <begin position="1033"/>
        <end position="1042"/>
    </location>
</feature>
<feature type="compositionally biased region" description="Acidic residues" evidence="2">
    <location>
        <begin position="1043"/>
        <end position="1056"/>
    </location>
</feature>
<feature type="modified residue" description="Phosphothreonine" evidence="1">
    <location>
        <position position="251"/>
    </location>
</feature>
<feature type="modified residue" description="Phosphothreonine" evidence="1">
    <location>
        <position position="363"/>
    </location>
</feature>
<feature type="modified residue" description="Phosphoserine" evidence="1">
    <location>
        <position position="434"/>
    </location>
</feature>
<feature type="modified residue" description="Phosphoserine" evidence="3">
    <location>
        <position position="439"/>
    </location>
</feature>
<feature type="modified residue" description="Phosphoserine" evidence="3">
    <location>
        <position position="440"/>
    </location>
</feature>
<feature type="modified residue" description="Phosphoserine" evidence="1">
    <location>
        <position position="595"/>
    </location>
</feature>
<feature type="modified residue" description="Phosphothreonine" evidence="1">
    <location>
        <position position="742"/>
    </location>
</feature>
<feature type="modified residue" description="Phosphoserine" evidence="1">
    <location>
        <position position="835"/>
    </location>
</feature>
<sequence>MQKMQCHLRRPLHSSSSFSSQAVMMTKPMQEHKKEYTAQQALFRPSGIVTSIPVPLAGSALLPYHVSSTLYQSKSLSSSEHNKANGGSPQEHIAMESSAEEVDCFKNTCLPSELSPCSQNDFKPTNGDIDMQSPSKLMSGSMIISNFSTAMVHTIVNETLESMTSFKATKPVDTNADYLTKTIKGKPVLSLCDQAAPQQNKASSKDMFAEHLSKSIIKHSLDKSKSVLPNIDKKPVSKEHMLVLGEESQLTLGETPKFLDFSDNSPQYCVPECKDSVGFGFSLEALPPCSMMTSQKSDLKGVMKDKVVTRHNLTNTAFEPLSFGQESSFRPSQTLSSAVLTCVDSLHVEDKQKIRDRNVIPDTPPSTPLVPSQTSSEWDIKKLTKQLKGELAKEFAPATPPSTPHNSSVGSLSENEQTTIEKEEFMLKLMRSLSEEVESSEGEEHPEMDVKSEHSGKKGQFADALATHIISLATEVAASHLDHEITQEFKVQNSHLTVPSQRSMLPALSHSDESIQTCSFASDMAAGVIAEAEKVANTRSCMLFGHERTICHVEGDRGKAEEKLDVEDIAHPREVETCVLSLPSCMPGLTYKYPSCESVTDEYAGHIIQVLKQEGGNSELIMDQYASRLAYRSVKSGVREAAKTVKVKCSLKLFPMHTSHVKTNKELLFSSKEHHQEVDKKRQRKKYGSHPCKYQTCDRTQDPCRNELSELYRFSASLASSITRDVKKQLTAPKVDLPKSSTDCCLFEKSECVDNRENVTGPEFSKSCQPLQNHGLCQNTSSLSGYSCGESAHTVEQYARKVVGDTLELSLGPAVFLNSETTTSPDRITYAEKLSPLINEACRYCDLKESHGCIRNSAQLFSKQGPCASAKPSSHSKLSSIRQKSRIFHLDVPQIHLNLDKRAVLAEKIVAEAIEKAERELSNTSLAADSGIGQDGISFAESLTTEIMTTAMTNAGHAVSSSKEVEDFQSTESLGSQQMNLSVGEDSTGSWSNLSFEDDHQDESSSFHHLSESSNGNSSSWSSLGLEGDLYENNLSFPTSDSDGPDDRESEQEDGAEGLQPSGKTLLIVNIDVEPGAVDPQLRVILQWLIPRRRKLENFIFSTLQRRSLSYFQSSYRREDGKWAMSCRL</sequence>